<evidence type="ECO:0000255" key="1">
    <source>
        <dbReference type="HAMAP-Rule" id="MF_02204"/>
    </source>
</evidence>
<evidence type="ECO:0000256" key="2">
    <source>
        <dbReference type="SAM" id="MobiDB-lite"/>
    </source>
</evidence>
<comment type="function">
    <text evidence="1">Part of the Tol-Pal system, which plays a role in outer membrane invagination during cell division and is important for maintaining outer membrane integrity.</text>
</comment>
<comment type="subunit">
    <text evidence="1">The Tol-Pal system is composed of five core proteins: the inner membrane proteins TolA, TolQ and TolR, the periplasmic protein TolB and the outer membrane protein Pal. They form a network linking the inner and outer membranes and the peptidoglycan layer.</text>
</comment>
<comment type="subcellular location">
    <subcellularLocation>
        <location evidence="1">Cell outer membrane</location>
        <topology evidence="1">Lipid-anchor</topology>
    </subcellularLocation>
</comment>
<comment type="similarity">
    <text evidence="1">Belongs to the Pal lipoprotein family.</text>
</comment>
<protein>
    <recommendedName>
        <fullName evidence="1">Peptidoglycan-associated lipoprotein</fullName>
        <shortName evidence="1">PAL</shortName>
    </recommendedName>
</protein>
<accession>P0A139</accession>
<accession>P43036</accession>
<dbReference type="EMBL" id="X74218">
    <property type="protein sequence ID" value="CAA52294.1"/>
    <property type="molecule type" value="Genomic_DNA"/>
</dbReference>
<dbReference type="PIR" id="S52308">
    <property type="entry name" value="S52308"/>
</dbReference>
<dbReference type="RefSeq" id="WP_003254755.1">
    <property type="nucleotide sequence ID" value="NZ_VCPS01000019.1"/>
</dbReference>
<dbReference type="SMR" id="P0A139"/>
<dbReference type="GeneID" id="97169556"/>
<dbReference type="eggNOG" id="COG2885">
    <property type="taxonomic scope" value="Bacteria"/>
</dbReference>
<dbReference type="OMA" id="STESCWS"/>
<dbReference type="OrthoDB" id="9809164at2"/>
<dbReference type="GO" id="GO:0009279">
    <property type="term" value="C:cell outer membrane"/>
    <property type="evidence" value="ECO:0007669"/>
    <property type="project" value="UniProtKB-SubCell"/>
</dbReference>
<dbReference type="GO" id="GO:0051301">
    <property type="term" value="P:cell division"/>
    <property type="evidence" value="ECO:0007669"/>
    <property type="project" value="UniProtKB-UniRule"/>
</dbReference>
<dbReference type="CDD" id="cd07185">
    <property type="entry name" value="OmpA_C-like"/>
    <property type="match status" value="1"/>
</dbReference>
<dbReference type="FunFam" id="3.30.1330.60:FF:000001">
    <property type="entry name" value="Peptidoglycan-associated lipoprotein"/>
    <property type="match status" value="1"/>
</dbReference>
<dbReference type="Gene3D" id="3.30.1330.60">
    <property type="entry name" value="OmpA-like domain"/>
    <property type="match status" value="1"/>
</dbReference>
<dbReference type="HAMAP" id="MF_02204">
    <property type="entry name" value="Pal"/>
    <property type="match status" value="1"/>
</dbReference>
<dbReference type="InterPro" id="IPR050330">
    <property type="entry name" value="Bact_OuterMem_StrucFunc"/>
</dbReference>
<dbReference type="InterPro" id="IPR006664">
    <property type="entry name" value="OMP_bac"/>
</dbReference>
<dbReference type="InterPro" id="IPR006665">
    <property type="entry name" value="OmpA-like"/>
</dbReference>
<dbReference type="InterPro" id="IPR006690">
    <property type="entry name" value="OMPA-like_CS"/>
</dbReference>
<dbReference type="InterPro" id="IPR036737">
    <property type="entry name" value="OmpA-like_sf"/>
</dbReference>
<dbReference type="InterPro" id="IPR039001">
    <property type="entry name" value="Pal"/>
</dbReference>
<dbReference type="InterPro" id="IPR014169">
    <property type="entry name" value="Pal_lipo_C"/>
</dbReference>
<dbReference type="NCBIfam" id="TIGR02802">
    <property type="entry name" value="Pal_lipo"/>
    <property type="match status" value="1"/>
</dbReference>
<dbReference type="PANTHER" id="PTHR30329:SF21">
    <property type="entry name" value="LIPOPROTEIN YIAD-RELATED"/>
    <property type="match status" value="1"/>
</dbReference>
<dbReference type="PANTHER" id="PTHR30329">
    <property type="entry name" value="STATOR ELEMENT OF FLAGELLAR MOTOR COMPLEX"/>
    <property type="match status" value="1"/>
</dbReference>
<dbReference type="Pfam" id="PF00691">
    <property type="entry name" value="OmpA"/>
    <property type="match status" value="1"/>
</dbReference>
<dbReference type="PRINTS" id="PR01021">
    <property type="entry name" value="OMPADOMAIN"/>
</dbReference>
<dbReference type="SUPFAM" id="SSF103088">
    <property type="entry name" value="OmpA-like"/>
    <property type="match status" value="1"/>
</dbReference>
<dbReference type="PROSITE" id="PS01068">
    <property type="entry name" value="OMPA_1"/>
    <property type="match status" value="1"/>
</dbReference>
<dbReference type="PROSITE" id="PS51123">
    <property type="entry name" value="OMPA_2"/>
    <property type="match status" value="1"/>
</dbReference>
<dbReference type="PROSITE" id="PS51257">
    <property type="entry name" value="PROKAR_LIPOPROTEIN"/>
    <property type="match status" value="1"/>
</dbReference>
<organism>
    <name type="scientific">Pseudomonas putida</name>
    <name type="common">Arthrobacter siderocapsulatus</name>
    <dbReference type="NCBI Taxonomy" id="303"/>
    <lineage>
        <taxon>Bacteria</taxon>
        <taxon>Pseudomonadati</taxon>
        <taxon>Pseudomonadota</taxon>
        <taxon>Gammaproteobacteria</taxon>
        <taxon>Pseudomonadales</taxon>
        <taxon>Pseudomonadaceae</taxon>
        <taxon>Pseudomonas</taxon>
    </lineage>
</organism>
<proteinExistence type="inferred from homology"/>
<name>PAL_PSEPU</name>
<keyword id="KW-0131">Cell cycle</keyword>
<keyword id="KW-0132">Cell division</keyword>
<keyword id="KW-0998">Cell outer membrane</keyword>
<keyword id="KW-0449">Lipoprotein</keyword>
<keyword id="KW-0472">Membrane</keyword>
<keyword id="KW-0564">Palmitate</keyword>
<keyword id="KW-0732">Signal</keyword>
<gene>
    <name evidence="1" type="primary">pal</name>
    <name type="synonym">oprL</name>
    <name type="synonym">pal1</name>
</gene>
<sequence length="166" mass="17833">MEMLKFGKFAALALAMAVAVGCSSKGGDNAGEGAAVDPNAGYGANTGAVDGSLSEEAALRAITTFYFEYDSSDLKPEAMRALDVHAKDLKANGNRVVLEGNTDERGTREYNMALGERRAKAVQRYLVLQGVSPAQLELVSYGEERPVATGNDEQSWAQNRRVELRK</sequence>
<reference key="1">
    <citation type="journal article" date="1996" name="J. Bacteriol.">
        <title>The Pseudomonas putida peptidoglycan-associated outer membrane lipoprotein is involved in maintenance of the integrity of the cell cell envelope.</title>
        <authorList>
            <person name="Rodriguez-Herva J.J."/>
            <person name="Ramos-Gonzalez M.I."/>
            <person name="Ramos J.L."/>
        </authorList>
    </citation>
    <scope>NUCLEOTIDE SEQUENCE [GENOMIC DNA]</scope>
    <source>
        <strain>ATCC 33015 / DSM 3931 / JCM 6156 / NCIMB 12182 / mt-2</strain>
    </source>
</reference>
<feature type="signal peptide" evidence="1">
    <location>
        <begin position="1"/>
        <end position="21"/>
    </location>
</feature>
<feature type="chain" id="PRO_0000020127" description="Peptidoglycan-associated lipoprotein" evidence="1">
    <location>
        <begin position="22"/>
        <end position="166"/>
    </location>
</feature>
<feature type="domain" description="OmpA-like" evidence="1">
    <location>
        <begin position="54"/>
        <end position="166"/>
    </location>
</feature>
<feature type="region of interest" description="Disordered" evidence="2">
    <location>
        <begin position="147"/>
        <end position="166"/>
    </location>
</feature>
<feature type="lipid moiety-binding region" description="N-palmitoyl cysteine" evidence="1">
    <location>
        <position position="22"/>
    </location>
</feature>
<feature type="lipid moiety-binding region" description="S-diacylglycerol cysteine" evidence="1">
    <location>
        <position position="22"/>
    </location>
</feature>